<organism>
    <name type="scientific">Adoxophyes orana granulovirus</name>
    <name type="common">AoGV</name>
    <dbReference type="NCBI Taxonomy" id="170617"/>
    <lineage>
        <taxon>Viruses</taxon>
        <taxon>Viruses incertae sedis</taxon>
        <taxon>Naldaviricetes</taxon>
        <taxon>Lefavirales</taxon>
        <taxon>Baculoviridae</taxon>
        <taxon>Betabaculovirus</taxon>
        <taxon>Betabaculovirus adoranae</taxon>
    </lineage>
</organism>
<dbReference type="EMBL" id="AF337646">
    <property type="protein sequence ID" value="AAL02082.1"/>
    <property type="molecule type" value="Genomic_DNA"/>
</dbReference>
<dbReference type="RefSeq" id="NP_872455.1">
    <property type="nucleotide sequence ID" value="NC_005038.1"/>
</dbReference>
<dbReference type="SMR" id="Q91B74"/>
<dbReference type="GeneID" id="1463344"/>
<dbReference type="KEGG" id="vg:1463344"/>
<dbReference type="OrthoDB" id="6325at10239"/>
<dbReference type="GO" id="GO:0039679">
    <property type="term" value="C:viral occlusion body"/>
    <property type="evidence" value="ECO:0007669"/>
    <property type="project" value="UniProtKB-KW"/>
</dbReference>
<dbReference type="GO" id="GO:0005198">
    <property type="term" value="F:structural molecule activity"/>
    <property type="evidence" value="ECO:0007669"/>
    <property type="project" value="InterPro"/>
</dbReference>
<dbReference type="InterPro" id="IPR001746">
    <property type="entry name" value="Polyhedrin"/>
</dbReference>
<dbReference type="Pfam" id="PF00738">
    <property type="entry name" value="Polyhedrin"/>
    <property type="match status" value="1"/>
</dbReference>
<accession>Q91B74</accession>
<evidence type="ECO:0000305" key="1"/>
<organismHost>
    <name type="scientific">Adoxophyes</name>
    <dbReference type="NCBI Taxonomy" id="85584"/>
</organismHost>
<comment type="function">
    <text>Component of the virus occlusion bodies, which are large proteinaceous structures, that protect the virus from the outside environment for extended periods until they are ingested by insect larvae.</text>
</comment>
<comment type="similarity">
    <text evidence="1">Belongs to the polyhedrin family.</text>
</comment>
<feature type="chain" id="PRO_0000217260" description="Granulin">
    <location>
        <begin position="1"/>
        <end position="248"/>
    </location>
</feature>
<protein>
    <recommendedName>
        <fullName>Granulin</fullName>
    </recommendedName>
    <alternativeName>
        <fullName>Matrix protein</fullName>
    </alternativeName>
</protein>
<keyword id="KW-0842">Viral occlusion body</keyword>
<reference key="1">
    <citation type="journal article" date="2001" name="J. Gen. Virol.">
        <title>Phylogenetic analysis of conserved genes within the ecdysteroid UDP-glucosyltransferase gene region of the slow-killing Adoxophyes orana granulovirus.</title>
        <authorList>
            <person name="Wormleaton S.L."/>
            <person name="Winstanley D."/>
        </authorList>
    </citation>
    <scope>NUCLEOTIDE SEQUENCE [GENOMIC DNA]</scope>
    <source>
        <strain>E1</strain>
    </source>
</reference>
<proteinExistence type="inferred from homology"/>
<name>GRAN_GVAO</name>
<sequence>MGYNKSLRYSRHEGTTCVIDNHHLKSLGSVLNDVRRKKDRIREAEYEPILDIADQYMVTEDPFRGPGKNVRITLFKEIRRVHPDTMKLVCNWSGKEFLRETWTRFISEEFPITTDQEIMDLWFEIQLRPMHPNRCYKFTMQYALGAHPDYVAHDVIRQHDPYYVGPNNIERINLSKKGFAFPLTCLQSVYNDNFERFFDDVLWPYFHRPLVYIGTTSAEVEEIMIEVSLLFKIKEFAPDVPLFTGPAY</sequence>